<sequence length="298" mass="31919">MTTTTAEGGGGVAPFVAKTYRMVDDPATDGVIAWGRDSNSFVVADPFAFSQTLLPAHFKHSNFSSFVRQLNTYGFRKVDPDRWEFAHVSFLRGQTHLLRRIVRRSSGGGGAKRKEEAGGCGGGGEAAAGDVDEESAVVALEVARLRREQREIEGRVAAMWRRVQETERRPKQMLAFLVKVVGDPQVLRRLVDRDNTNAAASNADDSAVHHQVKRPRLLLDSSSTTTTHGDRHLVTAAADGFYAGGCGPEAAAAAAFVPDDAVDFTGLYTGGDGFGNAVVDAGVDYPPAYAFPVVDSGY</sequence>
<comment type="function">
    <text evidence="1">Transcriptional regulator that specifically binds DNA of heat shock promoter elements (HSE).</text>
</comment>
<comment type="subunit">
    <text evidence="1">Homotrimer.</text>
</comment>
<comment type="subcellular location">
    <subcellularLocation>
        <location evidence="4">Nucleus</location>
    </subcellularLocation>
</comment>
<comment type="domain">
    <text>The hydrophobic-rich region (HR-A/B) corresponds to the oligomerization domain.</text>
</comment>
<comment type="PTM">
    <text evidence="1">Exhibits temperature-dependent phosphorylation.</text>
</comment>
<comment type="similarity">
    <text evidence="4">Belongs to the HSF family. Class C subfamily.</text>
</comment>
<gene>
    <name type="primary">HSFC2A</name>
    <name type="synonym">HSF05</name>
    <name type="ordered locus">Os02g0232000</name>
    <name type="ordered locus">LOC_Os02g13800</name>
    <name type="ORF">OJ1705_E12.15</name>
</gene>
<reference key="1">
    <citation type="journal article" date="2005" name="Nature">
        <title>The map-based sequence of the rice genome.</title>
        <authorList>
            <consortium name="International rice genome sequencing project (IRGSP)"/>
        </authorList>
    </citation>
    <scope>NUCLEOTIDE SEQUENCE [LARGE SCALE GENOMIC DNA]</scope>
    <source>
        <strain>cv. Nipponbare</strain>
    </source>
</reference>
<reference key="2">
    <citation type="journal article" date="2008" name="Nucleic Acids Res.">
        <title>The rice annotation project database (RAP-DB): 2008 update.</title>
        <authorList>
            <consortium name="The rice annotation project (RAP)"/>
        </authorList>
    </citation>
    <scope>GENOME REANNOTATION</scope>
    <source>
        <strain>cv. Nipponbare</strain>
    </source>
</reference>
<reference key="3">
    <citation type="journal article" date="2013" name="Rice">
        <title>Improvement of the Oryza sativa Nipponbare reference genome using next generation sequence and optical map data.</title>
        <authorList>
            <person name="Kawahara Y."/>
            <person name="de la Bastide M."/>
            <person name="Hamilton J.P."/>
            <person name="Kanamori H."/>
            <person name="McCombie W.R."/>
            <person name="Ouyang S."/>
            <person name="Schwartz D.C."/>
            <person name="Tanaka T."/>
            <person name="Wu J."/>
            <person name="Zhou S."/>
            <person name="Childs K.L."/>
            <person name="Davidson R.M."/>
            <person name="Lin H."/>
            <person name="Quesada-Ocampo L."/>
            <person name="Vaillancourt B."/>
            <person name="Sakai H."/>
            <person name="Lee S.S."/>
            <person name="Kim J."/>
            <person name="Numa H."/>
            <person name="Itoh T."/>
            <person name="Buell C.R."/>
            <person name="Matsumoto T."/>
        </authorList>
    </citation>
    <scope>GENOME REANNOTATION</scope>
    <source>
        <strain>cv. Nipponbare</strain>
    </source>
</reference>
<reference key="4">
    <citation type="journal article" date="2003" name="Science">
        <title>Collection, mapping, and annotation of over 28,000 cDNA clones from japonica rice.</title>
        <authorList>
            <consortium name="The rice full-length cDNA consortium"/>
        </authorList>
    </citation>
    <scope>NUCLEOTIDE SEQUENCE [LARGE SCALE MRNA]</scope>
    <source>
        <strain>cv. Nipponbare</strain>
    </source>
</reference>
<reference key="5">
    <citation type="journal article" date="2004" name="J. Biosci.">
        <title>Heat stress response in plants: a complex game with chaperones and more than twenty heat stress transcription factors.</title>
        <authorList>
            <person name="Baniwal S.K."/>
            <person name="Bharti K."/>
            <person name="Chan K.Y."/>
            <person name="Fauth M."/>
            <person name="Ganguli A."/>
            <person name="Kotak S."/>
            <person name="Mishra S.K."/>
            <person name="Nover L."/>
            <person name="Port M."/>
            <person name="Scharf K.-D."/>
            <person name="Tripp J."/>
            <person name="Weber C."/>
            <person name="Zielinski D."/>
            <person name="von Koskull-Doering P."/>
        </authorList>
    </citation>
    <scope>GENE FAMILY</scope>
    <scope>NOMENCLATURE</scope>
</reference>
<reference key="6">
    <citation type="journal article" date="2008" name="J. Genet. Genomics">
        <title>Genome-wide analysis of heat shock transcription factor families in rice and Arabidopsis.</title>
        <authorList>
            <person name="Guo J."/>
            <person name="Wu J."/>
            <person name="Ji Q."/>
            <person name="Wang C."/>
            <person name="Luo L."/>
            <person name="Yuan Y."/>
            <person name="Wang Y."/>
            <person name="Wang J."/>
        </authorList>
    </citation>
    <scope>GENE FAMILY</scope>
    <scope>NOMENCLATURE</scope>
</reference>
<keyword id="KW-0238">DNA-binding</keyword>
<keyword id="KW-0539">Nucleus</keyword>
<keyword id="KW-0597">Phosphoprotein</keyword>
<keyword id="KW-1185">Reference proteome</keyword>
<keyword id="KW-0346">Stress response</keyword>
<keyword id="KW-0804">Transcription</keyword>
<keyword id="KW-0805">Transcription regulation</keyword>
<accession>Q6EUG4</accession>
<accession>B7EZE1</accession>
<evidence type="ECO:0000250" key="1"/>
<evidence type="ECO:0000255" key="2"/>
<evidence type="ECO:0000256" key="3">
    <source>
        <dbReference type="SAM" id="MobiDB-lite"/>
    </source>
</evidence>
<evidence type="ECO:0000305" key="4"/>
<protein>
    <recommendedName>
        <fullName>Heat stress transcription factor C-2a</fullName>
    </recommendedName>
    <alternativeName>
        <fullName>Heat stress transcription factor 5</fullName>
        <shortName>OsHsf-05</shortName>
    </alternativeName>
</protein>
<proteinExistence type="evidence at transcript level"/>
<dbReference type="EMBL" id="AP004070">
    <property type="protein sequence ID" value="BAD27705.1"/>
    <property type="molecule type" value="Genomic_DNA"/>
</dbReference>
<dbReference type="EMBL" id="AP008208">
    <property type="protein sequence ID" value="BAF08284.1"/>
    <property type="molecule type" value="Genomic_DNA"/>
</dbReference>
<dbReference type="EMBL" id="AP014958">
    <property type="protein sequence ID" value="BAS77784.1"/>
    <property type="molecule type" value="Genomic_DNA"/>
</dbReference>
<dbReference type="EMBL" id="AK106488">
    <property type="protein sequence ID" value="BAG97738.1"/>
    <property type="molecule type" value="mRNA"/>
</dbReference>
<dbReference type="RefSeq" id="XP_015623571.1">
    <property type="nucleotide sequence ID" value="XM_015768085.1"/>
</dbReference>
<dbReference type="SMR" id="Q6EUG4"/>
<dbReference type="FunCoup" id="Q6EUG4">
    <property type="interactions" value="21"/>
</dbReference>
<dbReference type="STRING" id="39947.Q6EUG4"/>
<dbReference type="PaxDb" id="39947-Q6EUG4"/>
<dbReference type="EnsemblPlants" id="Os02t0232000-01">
    <property type="protein sequence ID" value="Os02t0232000-01"/>
    <property type="gene ID" value="Os02g0232000"/>
</dbReference>
<dbReference type="Gramene" id="Os02t0232000-01">
    <property type="protein sequence ID" value="Os02t0232000-01"/>
    <property type="gene ID" value="Os02g0232000"/>
</dbReference>
<dbReference type="KEGG" id="dosa:Os02g0232000"/>
<dbReference type="eggNOG" id="KOG0627">
    <property type="taxonomic scope" value="Eukaryota"/>
</dbReference>
<dbReference type="HOGENOM" id="CLU_030308_6_1_1"/>
<dbReference type="InParanoid" id="Q6EUG4"/>
<dbReference type="OMA" id="GVDYPPA"/>
<dbReference type="OrthoDB" id="60033at2759"/>
<dbReference type="Proteomes" id="UP000000763">
    <property type="component" value="Chromosome 2"/>
</dbReference>
<dbReference type="Proteomes" id="UP000059680">
    <property type="component" value="Chromosome 2"/>
</dbReference>
<dbReference type="GO" id="GO:0005634">
    <property type="term" value="C:nucleus"/>
    <property type="evidence" value="ECO:0000318"/>
    <property type="project" value="GO_Central"/>
</dbReference>
<dbReference type="GO" id="GO:0003700">
    <property type="term" value="F:DNA-binding transcription factor activity"/>
    <property type="evidence" value="ECO:0000318"/>
    <property type="project" value="GO_Central"/>
</dbReference>
<dbReference type="GO" id="GO:0043565">
    <property type="term" value="F:sequence-specific DNA binding"/>
    <property type="evidence" value="ECO:0007669"/>
    <property type="project" value="InterPro"/>
</dbReference>
<dbReference type="GO" id="GO:0034605">
    <property type="term" value="P:cellular response to heat"/>
    <property type="evidence" value="ECO:0000318"/>
    <property type="project" value="GO_Central"/>
</dbReference>
<dbReference type="GO" id="GO:0006357">
    <property type="term" value="P:regulation of transcription by RNA polymerase II"/>
    <property type="evidence" value="ECO:0000318"/>
    <property type="project" value="GO_Central"/>
</dbReference>
<dbReference type="FunFam" id="1.10.10.10:FF:000037">
    <property type="entry name" value="Heat stress transcription factor B-4"/>
    <property type="match status" value="1"/>
</dbReference>
<dbReference type="Gene3D" id="1.10.10.10">
    <property type="entry name" value="Winged helix-like DNA-binding domain superfamily/Winged helix DNA-binding domain"/>
    <property type="match status" value="1"/>
</dbReference>
<dbReference type="InterPro" id="IPR000232">
    <property type="entry name" value="HSF_DNA-bd"/>
</dbReference>
<dbReference type="InterPro" id="IPR036388">
    <property type="entry name" value="WH-like_DNA-bd_sf"/>
</dbReference>
<dbReference type="InterPro" id="IPR036390">
    <property type="entry name" value="WH_DNA-bd_sf"/>
</dbReference>
<dbReference type="PANTHER" id="PTHR10015">
    <property type="entry name" value="HEAT SHOCK TRANSCRIPTION FACTOR"/>
    <property type="match status" value="1"/>
</dbReference>
<dbReference type="PANTHER" id="PTHR10015:SF328">
    <property type="entry name" value="HEAT STRESS TRANSCRIPTION FACTOR C-2A"/>
    <property type="match status" value="1"/>
</dbReference>
<dbReference type="Pfam" id="PF00447">
    <property type="entry name" value="HSF_DNA-bind"/>
    <property type="match status" value="1"/>
</dbReference>
<dbReference type="PRINTS" id="PR00056">
    <property type="entry name" value="HSFDOMAIN"/>
</dbReference>
<dbReference type="SMART" id="SM00415">
    <property type="entry name" value="HSF"/>
    <property type="match status" value="1"/>
</dbReference>
<dbReference type="SUPFAM" id="SSF46785">
    <property type="entry name" value="Winged helix' DNA-binding domain"/>
    <property type="match status" value="1"/>
</dbReference>
<dbReference type="PROSITE" id="PS00434">
    <property type="entry name" value="HSF_DOMAIN"/>
    <property type="match status" value="1"/>
</dbReference>
<name>HFC2A_ORYSJ</name>
<organism>
    <name type="scientific">Oryza sativa subsp. japonica</name>
    <name type="common">Rice</name>
    <dbReference type="NCBI Taxonomy" id="39947"/>
    <lineage>
        <taxon>Eukaryota</taxon>
        <taxon>Viridiplantae</taxon>
        <taxon>Streptophyta</taxon>
        <taxon>Embryophyta</taxon>
        <taxon>Tracheophyta</taxon>
        <taxon>Spermatophyta</taxon>
        <taxon>Magnoliopsida</taxon>
        <taxon>Liliopsida</taxon>
        <taxon>Poales</taxon>
        <taxon>Poaceae</taxon>
        <taxon>BOP clade</taxon>
        <taxon>Oryzoideae</taxon>
        <taxon>Oryzeae</taxon>
        <taxon>Oryzinae</taxon>
        <taxon>Oryza</taxon>
        <taxon>Oryza sativa</taxon>
    </lineage>
</organism>
<feature type="chain" id="PRO_0000350843" description="Heat stress transcription factor C-2a">
    <location>
        <begin position="1"/>
        <end position="298"/>
    </location>
</feature>
<feature type="region of interest" description="Disordered" evidence="3">
    <location>
        <begin position="105"/>
        <end position="128"/>
    </location>
</feature>
<feature type="region of interest" description="Hydrophobic repeat HR-A/B">
    <location>
        <begin position="145"/>
        <end position="181"/>
    </location>
</feature>
<feature type="short sequence motif" description="Nuclear localization signal" evidence="2">
    <location>
        <begin position="213"/>
        <end position="216"/>
    </location>
</feature>